<proteinExistence type="evidence at protein level"/>
<organism>
    <name type="scientific">Homo sapiens</name>
    <name type="common">Human</name>
    <dbReference type="NCBI Taxonomy" id="9606"/>
    <lineage>
        <taxon>Eukaryota</taxon>
        <taxon>Metazoa</taxon>
        <taxon>Chordata</taxon>
        <taxon>Craniata</taxon>
        <taxon>Vertebrata</taxon>
        <taxon>Euteleostomi</taxon>
        <taxon>Mammalia</taxon>
        <taxon>Eutheria</taxon>
        <taxon>Euarchontoglires</taxon>
        <taxon>Primates</taxon>
        <taxon>Haplorrhini</taxon>
        <taxon>Catarrhini</taxon>
        <taxon>Hominidae</taxon>
        <taxon>Homo</taxon>
    </lineage>
</organism>
<comment type="function">
    <text evidence="6">Required for normal synaptic spine architecture and function. Necessary for DISC1 and GRM5 localization to postsynaptic density complexes and for both N-methyl D-aspartate receptor-dependent and metabotropic glutamate receptor-dependent long term depression.</text>
</comment>
<comment type="subunit">
    <text evidence="2 6 9">Interacts with CNKSR2 and DLG4 (By similarity). Interacts with CTNND2/Catenin delta-2. Forms a complex with N-cadherin through CTNND2 (PubMed:11729199). Interacts with CAMK2A (PubMed:28130356).</text>
</comment>
<comment type="interaction">
    <interactant intactId="EBI-524275">
        <id>Q96NW7</id>
    </interactant>
    <interactant intactId="EBI-8548356">
        <id>Q9Z1T4</id>
        <label>Cnksr2</label>
    </interactant>
    <organismsDiffer>true</organismsDiffer>
    <experiments>2</experiments>
</comment>
<comment type="subcellular location">
    <subcellularLocation>
        <location evidence="6">Cytoplasm</location>
    </subcellularLocation>
    <subcellularLocation>
        <location evidence="1">Postsynaptic density</location>
    </subcellularLocation>
</comment>
<comment type="alternative products">
    <event type="alternative splicing"/>
    <isoform>
        <id>Q96NW7-1</id>
        <name>1</name>
        <sequence type="displayed"/>
    </isoform>
    <isoform>
        <id>Q96NW7-2</id>
        <name>2</name>
        <sequence type="described" ref="VSP_010797"/>
    </isoform>
    <isoform>
        <id>Q96NW7-3</id>
        <name>3</name>
        <name>LRRC7</name>
        <sequence type="described" ref="VSP_010795 VSP_010796"/>
    </isoform>
</comment>
<comment type="tissue specificity">
    <text evidence="7">Brain-specific. Isoform 3 is ubiquitously expressed.</text>
</comment>
<comment type="similarity">
    <text evidence="12">Belongs to the LAP (LRR and PDZ) protein family.</text>
</comment>
<comment type="sequence caution" evidence="12">
    <conflict type="erroneous initiation">
        <sequence resource="EMBL-CDS" id="AAP06801"/>
    </conflict>
</comment>
<comment type="sequence caution" evidence="12">
    <conflict type="frameshift">
        <sequence resource="EMBL-CDS" id="BAA92603"/>
    </conflict>
</comment>
<name>LRRC7_HUMAN</name>
<protein>
    <recommendedName>
        <fullName>Leucine-rich repeat-containing protein 7</fullName>
    </recommendedName>
    <alternativeName>
        <fullName>Densin-180</fullName>
        <shortName>Densin</shortName>
    </alternativeName>
    <alternativeName>
        <fullName>Protein LAP1</fullName>
    </alternativeName>
</protein>
<dbReference type="EMBL" id="AF434715">
    <property type="protein sequence ID" value="AAL28133.1"/>
    <property type="molecule type" value="mRNA"/>
</dbReference>
<dbReference type="EMBL" id="AF498274">
    <property type="protein sequence ID" value="AAP06801.1"/>
    <property type="status" value="ALT_INIT"/>
    <property type="molecule type" value="mRNA"/>
</dbReference>
<dbReference type="EMBL" id="AL117353">
    <property type="status" value="NOT_ANNOTATED_CDS"/>
    <property type="molecule type" value="Genomic_DNA"/>
</dbReference>
<dbReference type="EMBL" id="AL157948">
    <property type="status" value="NOT_ANNOTATED_CDS"/>
    <property type="molecule type" value="Genomic_DNA"/>
</dbReference>
<dbReference type="EMBL" id="AL158840">
    <property type="status" value="NOT_ANNOTATED_CDS"/>
    <property type="molecule type" value="Genomic_DNA"/>
</dbReference>
<dbReference type="EMBL" id="AL359412">
    <property type="status" value="NOT_ANNOTATED_CDS"/>
    <property type="molecule type" value="Genomic_DNA"/>
</dbReference>
<dbReference type="EMBL" id="AL391728">
    <property type="status" value="NOT_ANNOTATED_CDS"/>
    <property type="molecule type" value="Genomic_DNA"/>
</dbReference>
<dbReference type="EMBL" id="CR749629">
    <property type="protein sequence ID" value="CAH18423.1"/>
    <property type="molecule type" value="mRNA"/>
</dbReference>
<dbReference type="EMBL" id="AB037786">
    <property type="protein sequence ID" value="BAA92603.1"/>
    <property type="status" value="ALT_FRAME"/>
    <property type="molecule type" value="mRNA"/>
</dbReference>
<dbReference type="RefSeq" id="NP_065845.1">
    <property type="nucleotide sequence ID" value="NM_020794.2"/>
</dbReference>
<dbReference type="PDB" id="6X5G">
    <property type="method" value="X-ray"/>
    <property type="resolution" value="1.85 A"/>
    <property type="chains" value="B=797-818"/>
</dbReference>
<dbReference type="PDB" id="7QQM">
    <property type="method" value="X-ray"/>
    <property type="resolution" value="1.60 A"/>
    <property type="chains" value="A=1445-1536"/>
</dbReference>
<dbReference type="PDBsum" id="6X5G"/>
<dbReference type="PDBsum" id="7QQM"/>
<dbReference type="SMR" id="Q96NW7"/>
<dbReference type="BioGRID" id="121610">
    <property type="interactions" value="38"/>
</dbReference>
<dbReference type="CORUM" id="Q96NW7"/>
<dbReference type="FunCoup" id="Q96NW7">
    <property type="interactions" value="31"/>
</dbReference>
<dbReference type="IntAct" id="Q96NW7">
    <property type="interactions" value="14"/>
</dbReference>
<dbReference type="MINT" id="Q96NW7"/>
<dbReference type="STRING" id="9606.ENSP00000309245"/>
<dbReference type="GlyCosmos" id="Q96NW7">
    <property type="glycosylation" value="3 sites, 1 glycan"/>
</dbReference>
<dbReference type="GlyGen" id="Q96NW7">
    <property type="glycosylation" value="4 sites, 1 O-linked glycan (4 sites)"/>
</dbReference>
<dbReference type="iPTMnet" id="Q96NW7"/>
<dbReference type="PhosphoSitePlus" id="Q96NW7"/>
<dbReference type="SwissPalm" id="Q96NW7"/>
<dbReference type="BioMuta" id="LRRC7"/>
<dbReference type="DMDM" id="50401129"/>
<dbReference type="jPOST" id="Q96NW7"/>
<dbReference type="MassIVE" id="Q96NW7"/>
<dbReference type="PaxDb" id="9606-ENSP00000035383"/>
<dbReference type="PeptideAtlas" id="Q96NW7"/>
<dbReference type="ProteomicsDB" id="77567">
    <molecule id="Q96NW7-1"/>
</dbReference>
<dbReference type="ProteomicsDB" id="77568">
    <molecule id="Q96NW7-2"/>
</dbReference>
<dbReference type="ProteomicsDB" id="77569">
    <molecule id="Q96NW7-3"/>
</dbReference>
<dbReference type="Pumba" id="Q96NW7"/>
<dbReference type="UCSC" id="uc001dep.4">
    <molecule id="Q96NW7-1"/>
    <property type="organism name" value="human"/>
</dbReference>
<dbReference type="AGR" id="HGNC:18531"/>
<dbReference type="GeneCards" id="LRRC7"/>
<dbReference type="HGNC" id="HGNC:18531">
    <property type="gene designation" value="LRRC7"/>
</dbReference>
<dbReference type="MalaCards" id="LRRC7"/>
<dbReference type="MIM" id="614453">
    <property type="type" value="gene"/>
</dbReference>
<dbReference type="neXtProt" id="NX_Q96NW7"/>
<dbReference type="PharmGKB" id="PA134879588"/>
<dbReference type="eggNOG" id="KOG0619">
    <property type="taxonomic scope" value="Eukaryota"/>
</dbReference>
<dbReference type="InParanoid" id="Q96NW7"/>
<dbReference type="OrthoDB" id="2187496at2759"/>
<dbReference type="PAN-GO" id="Q96NW7">
    <property type="GO annotations" value="10 GO annotations based on evolutionary models"/>
</dbReference>
<dbReference type="PhylomeDB" id="Q96NW7"/>
<dbReference type="TreeFam" id="TF351429"/>
<dbReference type="PathwayCommons" id="Q96NW7"/>
<dbReference type="Reactome" id="R-HSA-438066">
    <property type="pathway name" value="Unblocking of NMDA receptors, glutamate binding and activation"/>
</dbReference>
<dbReference type="Reactome" id="R-HSA-442982">
    <property type="pathway name" value="Ras activation upon Ca2+ influx through NMDA receptor"/>
</dbReference>
<dbReference type="Reactome" id="R-HSA-5673001">
    <property type="pathway name" value="RAF/MAP kinase cascade"/>
</dbReference>
<dbReference type="Reactome" id="R-HSA-6798695">
    <property type="pathway name" value="Neutrophil degranulation"/>
</dbReference>
<dbReference type="Reactome" id="R-HSA-9609736">
    <property type="pathway name" value="Assembly and cell surface presentation of NMDA receptors"/>
</dbReference>
<dbReference type="Reactome" id="R-HSA-9617324">
    <property type="pathway name" value="Negative regulation of NMDA receptor-mediated neuronal transmission"/>
</dbReference>
<dbReference type="Reactome" id="R-HSA-9620244">
    <property type="pathway name" value="Long-term potentiation"/>
</dbReference>
<dbReference type="SignaLink" id="Q96NW7"/>
<dbReference type="SIGNOR" id="Q96NW7"/>
<dbReference type="BioGRID-ORCS" id="57554">
    <property type="hits" value="8 hits in 1143 CRISPR screens"/>
</dbReference>
<dbReference type="CD-CODE" id="FB4E32DD">
    <property type="entry name" value="Presynaptic clusters and postsynaptic densities"/>
</dbReference>
<dbReference type="ChiTaRS" id="LRRC7">
    <property type="organism name" value="human"/>
</dbReference>
<dbReference type="GeneWiki" id="LRRC7"/>
<dbReference type="GenomeRNAi" id="57554"/>
<dbReference type="Pharos" id="Q96NW7">
    <property type="development level" value="Tbio"/>
</dbReference>
<dbReference type="PRO" id="PR:Q96NW7"/>
<dbReference type="Proteomes" id="UP000005640">
    <property type="component" value="Unplaced"/>
</dbReference>
<dbReference type="RNAct" id="Q96NW7">
    <property type="molecule type" value="protein"/>
</dbReference>
<dbReference type="GO" id="GO:0005912">
    <property type="term" value="C:adherens junction"/>
    <property type="evidence" value="ECO:0000318"/>
    <property type="project" value="GO_Central"/>
</dbReference>
<dbReference type="GO" id="GO:0043194">
    <property type="term" value="C:axon initial segment"/>
    <property type="evidence" value="ECO:0000318"/>
    <property type="project" value="GO_Central"/>
</dbReference>
<dbReference type="GO" id="GO:0016323">
    <property type="term" value="C:basolateral plasma membrane"/>
    <property type="evidence" value="ECO:0000318"/>
    <property type="project" value="GO_Central"/>
</dbReference>
<dbReference type="GO" id="GO:0005829">
    <property type="term" value="C:cytosol"/>
    <property type="evidence" value="ECO:0000304"/>
    <property type="project" value="Reactome"/>
</dbReference>
<dbReference type="GO" id="GO:0005576">
    <property type="term" value="C:extracellular region"/>
    <property type="evidence" value="ECO:0000304"/>
    <property type="project" value="Reactome"/>
</dbReference>
<dbReference type="GO" id="GO:0014069">
    <property type="term" value="C:postsynaptic density"/>
    <property type="evidence" value="ECO:0000318"/>
    <property type="project" value="GO_Central"/>
</dbReference>
<dbReference type="GO" id="GO:0035580">
    <property type="term" value="C:specific granule lumen"/>
    <property type="evidence" value="ECO:0000304"/>
    <property type="project" value="Reactome"/>
</dbReference>
<dbReference type="GO" id="GO:0019901">
    <property type="term" value="F:protein kinase binding"/>
    <property type="evidence" value="ECO:0000318"/>
    <property type="project" value="GO_Central"/>
</dbReference>
<dbReference type="GO" id="GO:0098609">
    <property type="term" value="P:cell-cell adhesion"/>
    <property type="evidence" value="ECO:0000318"/>
    <property type="project" value="GO_Central"/>
</dbReference>
<dbReference type="GO" id="GO:0045197">
    <property type="term" value="P:establishment or maintenance of epithelial cell apical/basal polarity"/>
    <property type="evidence" value="ECO:0000318"/>
    <property type="project" value="GO_Central"/>
</dbReference>
<dbReference type="GO" id="GO:0098887">
    <property type="term" value="P:neurotransmitter receptor transport, endosome to postsynaptic membrane"/>
    <property type="evidence" value="ECO:0000318"/>
    <property type="project" value="GO_Central"/>
</dbReference>
<dbReference type="GO" id="GO:0010976">
    <property type="term" value="P:positive regulation of neuron projection development"/>
    <property type="evidence" value="ECO:0000318"/>
    <property type="project" value="GO_Central"/>
</dbReference>
<dbReference type="GO" id="GO:0043113">
    <property type="term" value="P:receptor clustering"/>
    <property type="evidence" value="ECO:0000318"/>
    <property type="project" value="GO_Central"/>
</dbReference>
<dbReference type="CDD" id="cd06749">
    <property type="entry name" value="PDZ_densin_erbin-like"/>
    <property type="match status" value="1"/>
</dbReference>
<dbReference type="FunFam" id="2.30.42.10:FF:000036">
    <property type="entry name" value="Erbin isoform 7"/>
    <property type="match status" value="1"/>
</dbReference>
<dbReference type="FunFam" id="3.80.10.10:FF:000118">
    <property type="entry name" value="Leucine rich repeat containing 7"/>
    <property type="match status" value="1"/>
</dbReference>
<dbReference type="FunFam" id="3.80.10.10:FF:000061">
    <property type="entry name" value="leucine-rich repeat-containing protein 7 isoform X1"/>
    <property type="match status" value="1"/>
</dbReference>
<dbReference type="Gene3D" id="2.30.42.10">
    <property type="match status" value="1"/>
</dbReference>
<dbReference type="Gene3D" id="3.80.10.10">
    <property type="entry name" value="Ribonuclease Inhibitor"/>
    <property type="match status" value="2"/>
</dbReference>
<dbReference type="InterPro" id="IPR001611">
    <property type="entry name" value="Leu-rich_rpt"/>
</dbReference>
<dbReference type="InterPro" id="IPR003591">
    <property type="entry name" value="Leu-rich_rpt_typical-subtyp"/>
</dbReference>
<dbReference type="InterPro" id="IPR032675">
    <property type="entry name" value="LRR_dom_sf"/>
</dbReference>
<dbReference type="InterPro" id="IPR055414">
    <property type="entry name" value="LRR_R13L4/SHOC2-like"/>
</dbReference>
<dbReference type="InterPro" id="IPR001478">
    <property type="entry name" value="PDZ"/>
</dbReference>
<dbReference type="InterPro" id="IPR036034">
    <property type="entry name" value="PDZ_sf"/>
</dbReference>
<dbReference type="InterPro" id="IPR050614">
    <property type="entry name" value="Synaptic_Scaffolding_LAP-MAGUK"/>
</dbReference>
<dbReference type="PANTHER" id="PTHR23119">
    <property type="entry name" value="DISCS LARGE"/>
    <property type="match status" value="1"/>
</dbReference>
<dbReference type="PANTHER" id="PTHR23119:SF48">
    <property type="entry name" value="LEUCINE-RICH REPEAT-CONTAINING PROTEIN 7"/>
    <property type="match status" value="1"/>
</dbReference>
<dbReference type="Pfam" id="PF23598">
    <property type="entry name" value="LRR_14"/>
    <property type="match status" value="1"/>
</dbReference>
<dbReference type="Pfam" id="PF13855">
    <property type="entry name" value="LRR_8"/>
    <property type="match status" value="3"/>
</dbReference>
<dbReference type="Pfam" id="PF00595">
    <property type="entry name" value="PDZ"/>
    <property type="match status" value="1"/>
</dbReference>
<dbReference type="SMART" id="SM00364">
    <property type="entry name" value="LRR_BAC"/>
    <property type="match status" value="10"/>
</dbReference>
<dbReference type="SMART" id="SM00365">
    <property type="entry name" value="LRR_SD22"/>
    <property type="match status" value="6"/>
</dbReference>
<dbReference type="SMART" id="SM00369">
    <property type="entry name" value="LRR_TYP"/>
    <property type="match status" value="11"/>
</dbReference>
<dbReference type="SMART" id="SM00228">
    <property type="entry name" value="PDZ"/>
    <property type="match status" value="1"/>
</dbReference>
<dbReference type="SUPFAM" id="SSF52058">
    <property type="entry name" value="L domain-like"/>
    <property type="match status" value="1"/>
</dbReference>
<dbReference type="SUPFAM" id="SSF50156">
    <property type="entry name" value="PDZ domain-like"/>
    <property type="match status" value="1"/>
</dbReference>
<dbReference type="PROSITE" id="PS51450">
    <property type="entry name" value="LRR"/>
    <property type="match status" value="15"/>
</dbReference>
<dbReference type="PROSITE" id="PS50106">
    <property type="entry name" value="PDZ"/>
    <property type="match status" value="1"/>
</dbReference>
<reference key="1">
    <citation type="journal article" date="2002" name="J. Biol. Chem.">
        <title>Densin-180 interacts with delta-catenin/neural plakophilin-related armadillo repeat protein at synapses.</title>
        <authorList>
            <person name="Izawa I."/>
            <person name="Nishizawa M."/>
            <person name="Ohtakara K."/>
            <person name="Inagaki M."/>
        </authorList>
    </citation>
    <scope>NUCLEOTIDE SEQUENCE [MRNA] (ISOFORM 1)</scope>
    <scope>FUNCTION</scope>
    <scope>SUBCELLULAR LOCATION</scope>
    <scope>INTERACTION WITH CTNND2</scope>
</reference>
<reference key="2">
    <citation type="journal article" date="2003" name="Int. J. Mol. Med.">
        <title>Cloning and characterization of a novel splice variant of the brain-specific protein densin-180.</title>
        <authorList>
            <person name="Wang L."/>
            <person name="Xu J."/>
            <person name="Wu Q."/>
            <person name="Dai J."/>
            <person name="Ye X."/>
            <person name="Zeng L."/>
            <person name="Ji C."/>
            <person name="Gu S."/>
            <person name="Zhao R.C."/>
            <person name="Xie Y."/>
            <person name="Mao Y."/>
        </authorList>
    </citation>
    <scope>NUCLEOTIDE SEQUENCE [MRNA] (ISOFORM 3)</scope>
    <scope>TISSUE SPECIFICITY</scope>
    <source>
        <tissue>Brain</tissue>
    </source>
</reference>
<reference key="3">
    <citation type="journal article" date="2006" name="Nature">
        <title>The DNA sequence and biological annotation of human chromosome 1.</title>
        <authorList>
            <person name="Gregory S.G."/>
            <person name="Barlow K.F."/>
            <person name="McLay K.E."/>
            <person name="Kaul R."/>
            <person name="Swarbreck D."/>
            <person name="Dunham A."/>
            <person name="Scott C.E."/>
            <person name="Howe K.L."/>
            <person name="Woodfine K."/>
            <person name="Spencer C.C.A."/>
            <person name="Jones M.C."/>
            <person name="Gillson C."/>
            <person name="Searle S."/>
            <person name="Zhou Y."/>
            <person name="Kokocinski F."/>
            <person name="McDonald L."/>
            <person name="Evans R."/>
            <person name="Phillips K."/>
            <person name="Atkinson A."/>
            <person name="Cooper R."/>
            <person name="Jones C."/>
            <person name="Hall R.E."/>
            <person name="Andrews T.D."/>
            <person name="Lloyd C."/>
            <person name="Ainscough R."/>
            <person name="Almeida J.P."/>
            <person name="Ambrose K.D."/>
            <person name="Anderson F."/>
            <person name="Andrew R.W."/>
            <person name="Ashwell R.I.S."/>
            <person name="Aubin K."/>
            <person name="Babbage A.K."/>
            <person name="Bagguley C.L."/>
            <person name="Bailey J."/>
            <person name="Beasley H."/>
            <person name="Bethel G."/>
            <person name="Bird C.P."/>
            <person name="Bray-Allen S."/>
            <person name="Brown J.Y."/>
            <person name="Brown A.J."/>
            <person name="Buckley D."/>
            <person name="Burton J."/>
            <person name="Bye J."/>
            <person name="Carder C."/>
            <person name="Chapman J.C."/>
            <person name="Clark S.Y."/>
            <person name="Clarke G."/>
            <person name="Clee C."/>
            <person name="Cobley V."/>
            <person name="Collier R.E."/>
            <person name="Corby N."/>
            <person name="Coville G.J."/>
            <person name="Davies J."/>
            <person name="Deadman R."/>
            <person name="Dunn M."/>
            <person name="Earthrowl M."/>
            <person name="Ellington A.G."/>
            <person name="Errington H."/>
            <person name="Frankish A."/>
            <person name="Frankland J."/>
            <person name="French L."/>
            <person name="Garner P."/>
            <person name="Garnett J."/>
            <person name="Gay L."/>
            <person name="Ghori M.R.J."/>
            <person name="Gibson R."/>
            <person name="Gilby L.M."/>
            <person name="Gillett W."/>
            <person name="Glithero R.J."/>
            <person name="Grafham D.V."/>
            <person name="Griffiths C."/>
            <person name="Griffiths-Jones S."/>
            <person name="Grocock R."/>
            <person name="Hammond S."/>
            <person name="Harrison E.S.I."/>
            <person name="Hart E."/>
            <person name="Haugen E."/>
            <person name="Heath P.D."/>
            <person name="Holmes S."/>
            <person name="Holt K."/>
            <person name="Howden P.J."/>
            <person name="Hunt A.R."/>
            <person name="Hunt S.E."/>
            <person name="Hunter G."/>
            <person name="Isherwood J."/>
            <person name="James R."/>
            <person name="Johnson C."/>
            <person name="Johnson D."/>
            <person name="Joy A."/>
            <person name="Kay M."/>
            <person name="Kershaw J.K."/>
            <person name="Kibukawa M."/>
            <person name="Kimberley A.M."/>
            <person name="King A."/>
            <person name="Knights A.J."/>
            <person name="Lad H."/>
            <person name="Laird G."/>
            <person name="Lawlor S."/>
            <person name="Leongamornlert D.A."/>
            <person name="Lloyd D.M."/>
            <person name="Loveland J."/>
            <person name="Lovell J."/>
            <person name="Lush M.J."/>
            <person name="Lyne R."/>
            <person name="Martin S."/>
            <person name="Mashreghi-Mohammadi M."/>
            <person name="Matthews L."/>
            <person name="Matthews N.S.W."/>
            <person name="McLaren S."/>
            <person name="Milne S."/>
            <person name="Mistry S."/>
            <person name="Moore M.J.F."/>
            <person name="Nickerson T."/>
            <person name="O'Dell C.N."/>
            <person name="Oliver K."/>
            <person name="Palmeiri A."/>
            <person name="Palmer S.A."/>
            <person name="Parker A."/>
            <person name="Patel D."/>
            <person name="Pearce A.V."/>
            <person name="Peck A.I."/>
            <person name="Pelan S."/>
            <person name="Phelps K."/>
            <person name="Phillimore B.J."/>
            <person name="Plumb R."/>
            <person name="Rajan J."/>
            <person name="Raymond C."/>
            <person name="Rouse G."/>
            <person name="Saenphimmachak C."/>
            <person name="Sehra H.K."/>
            <person name="Sheridan E."/>
            <person name="Shownkeen R."/>
            <person name="Sims S."/>
            <person name="Skuce C.D."/>
            <person name="Smith M."/>
            <person name="Steward C."/>
            <person name="Subramanian S."/>
            <person name="Sycamore N."/>
            <person name="Tracey A."/>
            <person name="Tromans A."/>
            <person name="Van Helmond Z."/>
            <person name="Wall M."/>
            <person name="Wallis J.M."/>
            <person name="White S."/>
            <person name="Whitehead S.L."/>
            <person name="Wilkinson J.E."/>
            <person name="Willey D.L."/>
            <person name="Williams H."/>
            <person name="Wilming L."/>
            <person name="Wray P.W."/>
            <person name="Wu Z."/>
            <person name="Coulson A."/>
            <person name="Vaudin M."/>
            <person name="Sulston J.E."/>
            <person name="Durbin R.M."/>
            <person name="Hubbard T."/>
            <person name="Wooster R."/>
            <person name="Dunham I."/>
            <person name="Carter N.P."/>
            <person name="McVean G."/>
            <person name="Ross M.T."/>
            <person name="Harrow J."/>
            <person name="Olson M.V."/>
            <person name="Beck S."/>
            <person name="Rogers J."/>
            <person name="Bentley D.R."/>
        </authorList>
    </citation>
    <scope>NUCLEOTIDE SEQUENCE [LARGE SCALE GENOMIC DNA]</scope>
</reference>
<reference key="4">
    <citation type="journal article" date="2007" name="BMC Genomics">
        <title>The full-ORF clone resource of the German cDNA consortium.</title>
        <authorList>
            <person name="Bechtel S."/>
            <person name="Rosenfelder H."/>
            <person name="Duda A."/>
            <person name="Schmidt C.P."/>
            <person name="Ernst U."/>
            <person name="Wellenreuther R."/>
            <person name="Mehrle A."/>
            <person name="Schuster C."/>
            <person name="Bahr A."/>
            <person name="Bloecker H."/>
            <person name="Heubner D."/>
            <person name="Hoerlein A."/>
            <person name="Michel G."/>
            <person name="Wedler H."/>
            <person name="Koehrer K."/>
            <person name="Ottenwaelder B."/>
            <person name="Poustka A."/>
            <person name="Wiemann S."/>
            <person name="Schupp I."/>
        </authorList>
    </citation>
    <scope>NUCLEOTIDE SEQUENCE [LARGE SCALE MRNA] OF 8-1537 (ISOFORM 1)</scope>
    <source>
        <tissue>Amygdala</tissue>
    </source>
</reference>
<reference key="5">
    <citation type="journal article" date="2000" name="DNA Res.">
        <title>Prediction of the coding sequences of unidentified human genes. XVI. The complete sequences of 150 new cDNA clones from brain which code for large proteins in vitro.</title>
        <authorList>
            <person name="Nagase T."/>
            <person name="Kikuno R."/>
            <person name="Ishikawa K."/>
            <person name="Hirosawa M."/>
            <person name="Ohara O."/>
        </authorList>
    </citation>
    <scope>NUCLEOTIDE SEQUENCE [LARGE SCALE MRNA] OF 641-1537 (ISOFORM 2)</scope>
    <source>
        <tissue>Brain</tissue>
    </source>
</reference>
<reference key="6">
    <citation type="journal article" date="2017" name="J. Neurosci.">
        <title>Mutation Disrupts Dendritic Morphology and Synaptic Transmission, and Causes ASD-Related Behaviors.</title>
        <authorList>
            <person name="Stephenson J.R."/>
            <person name="Wang X."/>
            <person name="Perfitt T.L."/>
            <person name="Parrish W.P."/>
            <person name="Shonesy B.C."/>
            <person name="Marks C.R."/>
            <person name="Mortlock D.P."/>
            <person name="Nakagawa T."/>
            <person name="Sutcliffe J.S."/>
            <person name="Colbran R.J."/>
        </authorList>
    </citation>
    <scope>INTERACTION WITH CAMK2A</scope>
</reference>
<reference key="7">
    <citation type="journal article" date="2006" name="Science">
        <title>The consensus coding sequences of human breast and colorectal cancers.</title>
        <authorList>
            <person name="Sjoeblom T."/>
            <person name="Jones S."/>
            <person name="Wood L.D."/>
            <person name="Parsons D.W."/>
            <person name="Lin J."/>
            <person name="Barber T.D."/>
            <person name="Mandelker D."/>
            <person name="Leary R.J."/>
            <person name="Ptak J."/>
            <person name="Silliman N."/>
            <person name="Szabo S."/>
            <person name="Buckhaults P."/>
            <person name="Farrell C."/>
            <person name="Meeh P."/>
            <person name="Markowitz S.D."/>
            <person name="Willis J."/>
            <person name="Dawson D."/>
            <person name="Willson J.K.V."/>
            <person name="Gazdar A.F."/>
            <person name="Hartigan J."/>
            <person name="Wu L."/>
            <person name="Liu C."/>
            <person name="Parmigiani G."/>
            <person name="Park B.H."/>
            <person name="Bachman K.E."/>
            <person name="Papadopoulos N."/>
            <person name="Vogelstein B."/>
            <person name="Kinzler K.W."/>
            <person name="Velculescu V.E."/>
        </authorList>
    </citation>
    <scope>VARIANT [LARGE SCALE ANALYSIS] MET-235</scope>
</reference>
<evidence type="ECO:0000250" key="1"/>
<evidence type="ECO:0000250" key="2">
    <source>
        <dbReference type="UniProtKB" id="P70587"/>
    </source>
</evidence>
<evidence type="ECO:0000250" key="3">
    <source>
        <dbReference type="UniProtKB" id="Q80TE7"/>
    </source>
</evidence>
<evidence type="ECO:0000255" key="4">
    <source>
        <dbReference type="PROSITE-ProRule" id="PRU00143"/>
    </source>
</evidence>
<evidence type="ECO:0000256" key="5">
    <source>
        <dbReference type="SAM" id="MobiDB-lite"/>
    </source>
</evidence>
<evidence type="ECO:0000269" key="6">
    <source>
    </source>
</evidence>
<evidence type="ECO:0000269" key="7">
    <source>
    </source>
</evidence>
<evidence type="ECO:0000269" key="8">
    <source>
    </source>
</evidence>
<evidence type="ECO:0000269" key="9">
    <source>
    </source>
</evidence>
<evidence type="ECO:0000303" key="10">
    <source>
    </source>
</evidence>
<evidence type="ECO:0000303" key="11">
    <source>
    </source>
</evidence>
<evidence type="ECO:0000305" key="12"/>
<evidence type="ECO:0007829" key="13">
    <source>
        <dbReference type="PDB" id="7QQM"/>
    </source>
</evidence>
<sequence>MTTKRKIIGRLVPCRCFRGEEEIISVLDYSHCSLQQVPKEVFNFERTLEELYLDANQIEELPKQLFNCQALRKLSIPDNDLSNLPTTIASLVNLKELDISKNGVQEFPENIKCCKCLTIIEASVNPISKLPDGFTQLLNLTQLYLNDAFLEFLPANFGRLVKLRILELRENHLKTLPKSMHKLAQLERLDLGNNEFGELPEVLDQIQNLRELWMDNNALQVLPGSIGKLKMLVYLDMSKNRIETVDMDISGCEALEDLLLSSNMLQQLPDSIGLLKKLTTLKVDDNQLTMLPNTIGNLSLLEEFDCSCNELESLPSTIGYLHSLRTLAVDENFLPELPREIGSCKNVTVMSLRSNKLEFLPEEIGQMQKLRVLNLSDNRLKNLPFSFTKLKELAALWLSDNQSKALIPLQTEAHPETKQRVLTNYMFPQQPRGDEDFQSDSDSFNPTLWEEQRQQRMTVAFEFEDKKEDDENAGKVKDLSCQAPWERGQRGITLQPARLSGDCCTPWARCDQQIQDMPVPQNDPQLAWGCISGLQQERSMCTPLPVAAQSTTLPSLSGRQVEINLKRYPTPYPEDLKNMVKSVQNLVGKPSHGVRVENSNPTANTEQTVKEKYEHKWPVAPKEITVEDSFVHPANEMRIGELHPSLAETPLYPPKLVLLGKDKKESTDESEVDKTHCLNNSVSSGTYSDYSPSQASSGSSNTRVKVGSLQTTAKDAVHNSLWGNRIAPSFPQPLDSKPLLSQREAVPPGNIPQRPDRLPMSDTFTDNWTDGSHYDNTGFVAEETTAENANSNPLLSSKSRSTSSHGRRPLIRQDRIVGVPLELEQSTHRHTPETEVPPSNPWQNWTRTPSPFEDRTAFPSKLETTPTTSPLPERKEHIKESTEIPSPFSPGVPWEYHDSNPNRSLSNVFSQIHCRPESSKGVISISKSTERLSPLMKDIKSNKFKKSQSIDEIDIGTYKVYNIPLENYASGSDHLGSHERPDKMLGPEHGMSSMSRSQSVPMLDDEMLTYGSSKGPQQQKASMTKKVYQFDQSFNPQGSVEVKAEKRIPPPFQHNPEYVQQASKNIAKDLISPRAYRGYPPMEQMFSFSQPSVNEDAVVNAQFASQGARAGFLRRADSLVSATEMAMFRRVNEPHELPPTDRYGRPPYRGGLDRQSSVTVTESQFLKRNGRYEDEHPSYQEVKAQAGSFPVKNLTQRRPLSARSYSTESYGASQTRPVSARPTMAALLEKIPSDYNLGNYGDKPSDNSDLKTRPTPVKGEESCGKMPADWRQQLLRHIEARRLDRNAAYKHNTVNLGMLPYGGISAMHAGRSMTLNLQTKSKFDHQELPLQKTPSQQSNILDNGQEDVSPSGQWNPYPLGRRDVPPDTITKKAGSHIQTLMGSQSLQHRSREQQPYEGNINKVTIQQFQSPLPIQIPSSQATRGPQPGRCLIQTKGQRSMDGYPEQFCVRIEKNPGLGFSISGGISGQGNPFKPSDKGIFVTRVQPDGPASNLLQPGDKILQANGHSFVHMEHEKAVLLLKSFQNTVDLVIQRELTV</sequence>
<keyword id="KW-0002">3D-structure</keyword>
<keyword id="KW-0025">Alternative splicing</keyword>
<keyword id="KW-0963">Cytoplasm</keyword>
<keyword id="KW-0433">Leucine-rich repeat</keyword>
<keyword id="KW-0488">Methylation</keyword>
<keyword id="KW-0597">Phosphoprotein</keyword>
<keyword id="KW-1267">Proteomics identification</keyword>
<keyword id="KW-1185">Reference proteome</keyword>
<keyword id="KW-0677">Repeat</keyword>
<keyword id="KW-0770">Synapse</keyword>
<gene>
    <name type="primary">LRRC7</name>
    <name type="synonym">KIAA1365</name>
    <name type="synonym">LAP1</name>
</gene>
<accession>Q96NW7</accession>
<accession>Q5VXC2</accession>
<accession>Q5VXC3</accession>
<accession>Q68D07</accession>
<accession>Q86VE8</accession>
<accession>Q8WX20</accession>
<accession>Q9P2I2</accession>
<feature type="chain" id="PRO_0000188298" description="Leucine-rich repeat-containing protein 7">
    <location>
        <begin position="1"/>
        <end position="1537"/>
    </location>
</feature>
<feature type="repeat" description="LRR 1">
    <location>
        <begin position="23"/>
        <end position="44"/>
    </location>
</feature>
<feature type="repeat" description="LRR 2">
    <location>
        <begin position="47"/>
        <end position="68"/>
    </location>
</feature>
<feature type="repeat" description="LRR 3">
    <location>
        <begin position="70"/>
        <end position="91"/>
    </location>
</feature>
<feature type="repeat" description="LRR 4">
    <location>
        <begin position="93"/>
        <end position="114"/>
    </location>
</feature>
<feature type="repeat" description="LRR 5">
    <location>
        <begin position="116"/>
        <end position="137"/>
    </location>
</feature>
<feature type="repeat" description="LRR 6">
    <location>
        <begin position="139"/>
        <end position="161"/>
    </location>
</feature>
<feature type="repeat" description="LRR 7">
    <location>
        <begin position="162"/>
        <end position="183"/>
    </location>
</feature>
<feature type="repeat" description="LRR 8">
    <location>
        <begin position="185"/>
        <end position="206"/>
    </location>
</feature>
<feature type="repeat" description="LRR 9">
    <location>
        <begin position="208"/>
        <end position="229"/>
    </location>
</feature>
<feature type="repeat" description="LRR 10">
    <location>
        <begin position="231"/>
        <end position="253"/>
    </location>
</feature>
<feature type="repeat" description="LRR 11">
    <location>
        <begin position="254"/>
        <end position="275"/>
    </location>
</feature>
<feature type="repeat" description="LRR 12">
    <location>
        <begin position="277"/>
        <end position="298"/>
    </location>
</feature>
<feature type="repeat" description="LRR 13">
    <location>
        <begin position="300"/>
        <end position="321"/>
    </location>
</feature>
<feature type="repeat" description="LRR 14">
    <location>
        <begin position="323"/>
        <end position="344"/>
    </location>
</feature>
<feature type="repeat" description="LRR 15">
    <location>
        <begin position="346"/>
        <end position="367"/>
    </location>
</feature>
<feature type="repeat" description="LRR 16">
    <location>
        <begin position="369"/>
        <end position="391"/>
    </location>
</feature>
<feature type="repeat" description="LRR 17">
    <location>
        <begin position="392"/>
        <end position="413"/>
    </location>
</feature>
<feature type="domain" description="PDZ" evidence="4">
    <location>
        <begin position="1445"/>
        <end position="1535"/>
    </location>
</feature>
<feature type="region of interest" description="Disordered" evidence="5">
    <location>
        <begin position="663"/>
        <end position="709"/>
    </location>
</feature>
<feature type="region of interest" description="Disordered" evidence="5">
    <location>
        <begin position="730"/>
        <end position="759"/>
    </location>
</feature>
<feature type="region of interest" description="Disordered" evidence="5">
    <location>
        <begin position="786"/>
        <end position="810"/>
    </location>
</feature>
<feature type="region of interest" description="Disordered" evidence="5">
    <location>
        <begin position="824"/>
        <end position="892"/>
    </location>
</feature>
<feature type="region of interest" description="Disordered" evidence="5">
    <location>
        <begin position="1136"/>
        <end position="1159"/>
    </location>
</feature>
<feature type="region of interest" description="Disordered" evidence="5">
    <location>
        <begin position="1234"/>
        <end position="1265"/>
    </location>
</feature>
<feature type="region of interest" description="Disordered" evidence="5">
    <location>
        <begin position="1331"/>
        <end position="1360"/>
    </location>
</feature>
<feature type="compositionally biased region" description="Basic and acidic residues" evidence="5">
    <location>
        <begin position="663"/>
        <end position="676"/>
    </location>
</feature>
<feature type="compositionally biased region" description="Polar residues" evidence="5">
    <location>
        <begin position="677"/>
        <end position="709"/>
    </location>
</feature>
<feature type="compositionally biased region" description="Low complexity" evidence="5">
    <location>
        <begin position="790"/>
        <end position="804"/>
    </location>
</feature>
<feature type="compositionally biased region" description="Low complexity" evidence="5">
    <location>
        <begin position="859"/>
        <end position="871"/>
    </location>
</feature>
<feature type="compositionally biased region" description="Basic and acidic residues" evidence="5">
    <location>
        <begin position="872"/>
        <end position="882"/>
    </location>
</feature>
<feature type="compositionally biased region" description="Basic and acidic residues" evidence="5">
    <location>
        <begin position="1243"/>
        <end position="1263"/>
    </location>
</feature>
<feature type="compositionally biased region" description="Polar residues" evidence="5">
    <location>
        <begin position="1332"/>
        <end position="1354"/>
    </location>
</feature>
<feature type="modified residue" description="Phosphoserine" evidence="3">
    <location>
        <position position="439"/>
    </location>
</feature>
<feature type="modified residue" description="Phosphoserine" evidence="2">
    <location>
        <position position="441"/>
    </location>
</feature>
<feature type="modified residue" description="Phosphoserine" evidence="3">
    <location>
        <position position="443"/>
    </location>
</feature>
<feature type="modified residue" description="Phosphothreonine" evidence="3">
    <location>
        <position position="831"/>
    </location>
</feature>
<feature type="modified residue" description="Phosphoserine" evidence="3">
    <location>
        <position position="850"/>
    </location>
</feature>
<feature type="modified residue" description="Phosphothreonine" evidence="3">
    <location>
        <position position="865"/>
    </location>
</feature>
<feature type="modified residue" description="Phosphoserine" evidence="3">
    <location>
        <position position="869"/>
    </location>
</feature>
<feature type="modified residue" description="Phosphoserine" evidence="3">
    <location>
        <position position="947"/>
    </location>
</feature>
<feature type="modified residue" description="Phosphoserine" evidence="3">
    <location>
        <position position="949"/>
    </location>
</feature>
<feature type="modified residue" description="Phosphoserine" evidence="3">
    <location>
        <position position="1118"/>
    </location>
</feature>
<feature type="modified residue" description="Omega-N-methylarginine" evidence="3">
    <location>
        <position position="1149"/>
    </location>
</feature>
<feature type="modified residue" description="Phosphoserine" evidence="3">
    <location>
        <position position="1233"/>
    </location>
</feature>
<feature type="modified residue" description="Phosphoserine" evidence="2">
    <location>
        <position position="1335"/>
    </location>
</feature>
<feature type="modified residue" description="Phosphoserine" evidence="3">
    <location>
        <position position="1439"/>
    </location>
</feature>
<feature type="splice variant" id="VSP_010795" description="In isoform 3." evidence="11">
    <original>KS</original>
    <variation>NI</variation>
    <location>
        <begin position="178"/>
        <end position="179"/>
    </location>
</feature>
<feature type="splice variant" id="VSP_010796" description="In isoform 3." evidence="11">
    <location>
        <begin position="180"/>
        <end position="1537"/>
    </location>
</feature>
<feature type="splice variant" id="VSP_010797" description="In isoform 2." evidence="10">
    <location>
        <begin position="1286"/>
        <end position="1332"/>
    </location>
</feature>
<feature type="sequence variant" id="VAR_035715" description="In a breast cancer sample; somatic mutation." evidence="8">
    <original>L</original>
    <variation>M</variation>
    <location>
        <position position="235"/>
    </location>
</feature>
<feature type="sequence variant" id="VAR_049727" description="In dbSNP:rs12069888.">
    <original>H</original>
    <variation>Y</variation>
    <location>
        <position position="1054"/>
    </location>
</feature>
<feature type="sequence conflict" description="In Ref. 4." evidence="12" ref="4">
    <original>L</original>
    <variation>P</variation>
    <location>
        <position position="373"/>
    </location>
</feature>
<feature type="strand" evidence="13">
    <location>
        <begin position="1445"/>
        <end position="1452"/>
    </location>
</feature>
<feature type="strand" evidence="13">
    <location>
        <begin position="1454"/>
        <end position="1456"/>
    </location>
</feature>
<feature type="strand" evidence="13">
    <location>
        <begin position="1458"/>
        <end position="1463"/>
    </location>
</feature>
<feature type="strand" evidence="13">
    <location>
        <begin position="1478"/>
        <end position="1484"/>
    </location>
</feature>
<feature type="turn" evidence="13">
    <location>
        <begin position="1489"/>
        <end position="1493"/>
    </location>
</feature>
<feature type="strand" evidence="13">
    <location>
        <begin position="1499"/>
        <end position="1503"/>
    </location>
</feature>
<feature type="helix" evidence="13">
    <location>
        <begin position="1513"/>
        <end position="1522"/>
    </location>
</feature>
<feature type="strand" evidence="13">
    <location>
        <begin position="1525"/>
        <end position="1533"/>
    </location>
</feature>